<comment type="function">
    <text evidence="3">Odorant receptor.</text>
</comment>
<comment type="subcellular location">
    <subcellularLocation>
        <location>Cell membrane</location>
        <topology>Multi-pass membrane protein</topology>
    </subcellularLocation>
</comment>
<comment type="similarity">
    <text evidence="2">Belongs to the G-protein coupled receptor 1 family.</text>
</comment>
<comment type="sequence caution" evidence="3">
    <conflict type="erroneous initiation">
        <sequence resource="EMBL-CDS" id="DAA04686"/>
    </conflict>
</comment>
<comment type="online information" name="Human Olfactory Receptor Data Exploratorium (HORDE)">
    <link uri="http://genome.weizmann.ac.il/horde/card/index/symbol:OR6B2"/>
</comment>
<feature type="chain" id="PRO_0000150621" description="Olfactory receptor 6B2">
    <location>
        <begin position="1"/>
        <end position="312"/>
    </location>
</feature>
<feature type="topological domain" description="Extracellular" evidence="1">
    <location>
        <begin position="1"/>
        <end position="25"/>
    </location>
</feature>
<feature type="transmembrane region" description="Helical; Name=1" evidence="1">
    <location>
        <begin position="26"/>
        <end position="46"/>
    </location>
</feature>
<feature type="topological domain" description="Cytoplasmic" evidence="1">
    <location>
        <begin position="47"/>
        <end position="54"/>
    </location>
</feature>
<feature type="transmembrane region" description="Helical; Name=2" evidence="1">
    <location>
        <begin position="55"/>
        <end position="75"/>
    </location>
</feature>
<feature type="topological domain" description="Extracellular" evidence="1">
    <location>
        <begin position="76"/>
        <end position="99"/>
    </location>
</feature>
<feature type="transmembrane region" description="Helical; Name=3" evidence="1">
    <location>
        <begin position="100"/>
        <end position="120"/>
    </location>
</feature>
<feature type="topological domain" description="Cytoplasmic" evidence="1">
    <location>
        <begin position="121"/>
        <end position="139"/>
    </location>
</feature>
<feature type="transmembrane region" description="Helical; Name=4" evidence="1">
    <location>
        <begin position="140"/>
        <end position="160"/>
    </location>
</feature>
<feature type="topological domain" description="Extracellular" evidence="1">
    <location>
        <begin position="161"/>
        <end position="196"/>
    </location>
</feature>
<feature type="transmembrane region" description="Helical; Name=5" evidence="1">
    <location>
        <begin position="197"/>
        <end position="217"/>
    </location>
</feature>
<feature type="topological domain" description="Cytoplasmic" evidence="1">
    <location>
        <begin position="218"/>
        <end position="237"/>
    </location>
</feature>
<feature type="transmembrane region" description="Helical; Name=6" evidence="1">
    <location>
        <begin position="238"/>
        <end position="258"/>
    </location>
</feature>
<feature type="topological domain" description="Extracellular" evidence="1">
    <location>
        <begin position="259"/>
        <end position="271"/>
    </location>
</feature>
<feature type="transmembrane region" description="Helical; Name=7" evidence="1">
    <location>
        <begin position="272"/>
        <end position="292"/>
    </location>
</feature>
<feature type="topological domain" description="Cytoplasmic" evidence="1">
    <location>
        <begin position="293"/>
        <end position="312"/>
    </location>
</feature>
<feature type="glycosylation site" description="N-linked (GlcNAc...) asparagine" evidence="1">
    <location>
        <position position="5"/>
    </location>
</feature>
<feature type="disulfide bond" evidence="2">
    <location>
        <begin position="97"/>
        <end position="189"/>
    </location>
</feature>
<feature type="sequence variant" id="VAR_062047" description="In dbSNP:rs10187574.">
    <original>C</original>
    <variation>R</variation>
    <location>
        <position position="179"/>
    </location>
</feature>
<feature type="sequence variant" id="VAR_062048" description="In dbSNP:rs60841887.">
    <original>R</original>
    <variation>C</variation>
    <location>
        <position position="227"/>
    </location>
</feature>
<sequence length="312" mass="35029">MSGENVTKVSTFILVGLPTAPGLQYLLFLLFLLTYLFVLVENLAIILIVWSSTSLHRPMYYFLSSMSFLEIWYVSDITPKMLEGFLLQQKRISFVGCMTQLYFFSSLVCTECVLLASMAYDRYVAICHPLRYHVLVTPGLCLQLVGFSFVSGFTISMIKVCFISSVTFCGSNVLNHFFCDISPILKLACTDFSTAELVDFILAFIILVFPLLATILSYWHITLAVLRIPSATGCWRAFSTCASHLTVVTVFYTALLFMYVRPQAIDSQSSNKLISAVYTVVTPIINPLIYCLRNKEFKDALKKALGLGQTSH</sequence>
<evidence type="ECO:0000255" key="1"/>
<evidence type="ECO:0000255" key="2">
    <source>
        <dbReference type="PROSITE-ProRule" id="PRU00521"/>
    </source>
</evidence>
<evidence type="ECO:0000305" key="3"/>
<name>OR6B2_HUMAN</name>
<dbReference type="EMBL" id="AB065663">
    <property type="protein sequence ID" value="BAC05889.1"/>
    <property type="molecule type" value="Genomic_DNA"/>
</dbReference>
<dbReference type="EMBL" id="CH471063">
    <property type="protein sequence ID" value="EAW71176.1"/>
    <property type="molecule type" value="Genomic_DNA"/>
</dbReference>
<dbReference type="EMBL" id="BC137561">
    <property type="protein sequence ID" value="AAI37562.1"/>
    <property type="molecule type" value="mRNA"/>
</dbReference>
<dbReference type="EMBL" id="BC137562">
    <property type="protein sequence ID" value="AAI37563.1"/>
    <property type="molecule type" value="mRNA"/>
</dbReference>
<dbReference type="EMBL" id="BK004288">
    <property type="protein sequence ID" value="DAA04686.1"/>
    <property type="status" value="ALT_INIT"/>
    <property type="molecule type" value="Genomic_DNA"/>
</dbReference>
<dbReference type="CCDS" id="CCDS46559.1"/>
<dbReference type="RefSeq" id="NP_001005853.1">
    <property type="nucleotide sequence ID" value="NM_001005853.1"/>
</dbReference>
<dbReference type="SMR" id="Q6IFH4"/>
<dbReference type="FunCoup" id="Q6IFH4">
    <property type="interactions" value="418"/>
</dbReference>
<dbReference type="STRING" id="9606.ENSP00000384563"/>
<dbReference type="GlyCosmos" id="Q6IFH4">
    <property type="glycosylation" value="1 site, No reported glycans"/>
</dbReference>
<dbReference type="GlyGen" id="Q6IFH4">
    <property type="glycosylation" value="2 sites"/>
</dbReference>
<dbReference type="iPTMnet" id="Q6IFH4"/>
<dbReference type="BioMuta" id="OR6B2"/>
<dbReference type="DMDM" id="84029382"/>
<dbReference type="MassIVE" id="Q6IFH4"/>
<dbReference type="PaxDb" id="9606-ENSP00000384563"/>
<dbReference type="PeptideAtlas" id="Q6IFH4"/>
<dbReference type="Antibodypedia" id="34510">
    <property type="antibodies" value="87 antibodies from 22 providers"/>
</dbReference>
<dbReference type="DNASU" id="389090"/>
<dbReference type="Ensembl" id="ENST00000319423.5">
    <property type="protein sequence ID" value="ENSP00000322435.5"/>
    <property type="gene ID" value="ENSG00000182083.8"/>
</dbReference>
<dbReference type="GeneID" id="389090"/>
<dbReference type="KEGG" id="hsa:389090"/>
<dbReference type="MANE-Select" id="ENST00000319423.5">
    <property type="protein sequence ID" value="ENSP00000322435.5"/>
    <property type="RefSeq nucleotide sequence ID" value="NM_001005853.1"/>
    <property type="RefSeq protein sequence ID" value="NP_001005853.1"/>
</dbReference>
<dbReference type="UCSC" id="uc010zoc.3">
    <property type="organism name" value="human"/>
</dbReference>
<dbReference type="AGR" id="HGNC:15041"/>
<dbReference type="CTD" id="389090"/>
<dbReference type="GeneCards" id="OR6B2"/>
<dbReference type="HGNC" id="HGNC:15041">
    <property type="gene designation" value="OR6B2"/>
</dbReference>
<dbReference type="HPA" id="ENSG00000182083">
    <property type="expression patterns" value="Not detected"/>
</dbReference>
<dbReference type="neXtProt" id="NX_Q6IFH4"/>
<dbReference type="PharmGKB" id="PA32577"/>
<dbReference type="VEuPathDB" id="HostDB:ENSG00000182083"/>
<dbReference type="eggNOG" id="ENOG502SJJZ">
    <property type="taxonomic scope" value="Eukaryota"/>
</dbReference>
<dbReference type="GeneTree" id="ENSGT01090000260045"/>
<dbReference type="HOGENOM" id="CLU_012526_8_1_1"/>
<dbReference type="InParanoid" id="Q6IFH4"/>
<dbReference type="OMA" id="AMIFTYV"/>
<dbReference type="OrthoDB" id="9447100at2759"/>
<dbReference type="PAN-GO" id="Q6IFH4">
    <property type="GO annotations" value="2 GO annotations based on evolutionary models"/>
</dbReference>
<dbReference type="PhylomeDB" id="Q6IFH4"/>
<dbReference type="TreeFam" id="TF337475"/>
<dbReference type="PathwayCommons" id="Q6IFH4"/>
<dbReference type="Reactome" id="R-HSA-9752946">
    <property type="pathway name" value="Expression and translocation of olfactory receptors"/>
</dbReference>
<dbReference type="BioGRID-ORCS" id="389090">
    <property type="hits" value="14 hits in 705 CRISPR screens"/>
</dbReference>
<dbReference type="GeneWiki" id="OR6B2"/>
<dbReference type="GenomeRNAi" id="389090"/>
<dbReference type="Pharos" id="Q6IFH4">
    <property type="development level" value="Tbio"/>
</dbReference>
<dbReference type="PRO" id="PR:Q6IFH4"/>
<dbReference type="Proteomes" id="UP000005640">
    <property type="component" value="Chromosome 2"/>
</dbReference>
<dbReference type="RNAct" id="Q6IFH4">
    <property type="molecule type" value="protein"/>
</dbReference>
<dbReference type="Bgee" id="ENSG00000182083">
    <property type="expression patterns" value="Expressed in tibial nerve and 14 other cell types or tissues"/>
</dbReference>
<dbReference type="ExpressionAtlas" id="Q6IFH4">
    <property type="expression patterns" value="baseline and differential"/>
</dbReference>
<dbReference type="GO" id="GO:0005829">
    <property type="term" value="C:cytosol"/>
    <property type="evidence" value="ECO:0000314"/>
    <property type="project" value="HPA"/>
</dbReference>
<dbReference type="GO" id="GO:0005886">
    <property type="term" value="C:plasma membrane"/>
    <property type="evidence" value="ECO:0000314"/>
    <property type="project" value="HPA"/>
</dbReference>
<dbReference type="GO" id="GO:0004930">
    <property type="term" value="F:G protein-coupled receptor activity"/>
    <property type="evidence" value="ECO:0007669"/>
    <property type="project" value="UniProtKB-KW"/>
</dbReference>
<dbReference type="GO" id="GO:0005549">
    <property type="term" value="F:odorant binding"/>
    <property type="evidence" value="ECO:0000318"/>
    <property type="project" value="GO_Central"/>
</dbReference>
<dbReference type="GO" id="GO:0004984">
    <property type="term" value="F:olfactory receptor activity"/>
    <property type="evidence" value="ECO:0000318"/>
    <property type="project" value="GO_Central"/>
</dbReference>
<dbReference type="CDD" id="cd15224">
    <property type="entry name" value="7tmA_OR6B-like"/>
    <property type="match status" value="1"/>
</dbReference>
<dbReference type="FunFam" id="1.10.1220.70:FF:000001">
    <property type="entry name" value="Olfactory receptor"/>
    <property type="match status" value="1"/>
</dbReference>
<dbReference type="FunFam" id="1.20.1070.10:FF:000001">
    <property type="entry name" value="Olfactory receptor"/>
    <property type="match status" value="1"/>
</dbReference>
<dbReference type="Gene3D" id="1.20.1070.10">
    <property type="entry name" value="Rhodopsin 7-helix transmembrane proteins"/>
    <property type="match status" value="1"/>
</dbReference>
<dbReference type="InterPro" id="IPR000276">
    <property type="entry name" value="GPCR_Rhodpsn"/>
</dbReference>
<dbReference type="InterPro" id="IPR017452">
    <property type="entry name" value="GPCR_Rhodpsn_7TM"/>
</dbReference>
<dbReference type="InterPro" id="IPR000725">
    <property type="entry name" value="Olfact_rcpt"/>
</dbReference>
<dbReference type="InterPro" id="IPR050516">
    <property type="entry name" value="Olfactory_GPCR"/>
</dbReference>
<dbReference type="PANTHER" id="PTHR26452">
    <property type="entry name" value="OLFACTORY RECEPTOR"/>
    <property type="match status" value="1"/>
</dbReference>
<dbReference type="Pfam" id="PF13853">
    <property type="entry name" value="7tm_4"/>
    <property type="match status" value="1"/>
</dbReference>
<dbReference type="PRINTS" id="PR00237">
    <property type="entry name" value="GPCRRHODOPSN"/>
</dbReference>
<dbReference type="PRINTS" id="PR00245">
    <property type="entry name" value="OLFACTORYR"/>
</dbReference>
<dbReference type="SUPFAM" id="SSF81321">
    <property type="entry name" value="Family A G protein-coupled receptor-like"/>
    <property type="match status" value="1"/>
</dbReference>
<dbReference type="PROSITE" id="PS00237">
    <property type="entry name" value="G_PROTEIN_RECEP_F1_1"/>
    <property type="match status" value="1"/>
</dbReference>
<dbReference type="PROSITE" id="PS50262">
    <property type="entry name" value="G_PROTEIN_RECEP_F1_2"/>
    <property type="match status" value="1"/>
</dbReference>
<gene>
    <name type="primary">OR6B2</name>
    <name type="synonym">OR6B2P</name>
</gene>
<protein>
    <recommendedName>
        <fullName>Olfactory receptor 6B2</fullName>
    </recommendedName>
    <alternativeName>
        <fullName>Olfactory receptor OR2-1</fullName>
    </alternativeName>
</protein>
<reference key="1">
    <citation type="submission" date="2001-07" db="EMBL/GenBank/DDBJ databases">
        <title>Genome-wide discovery and analysis of human seven transmembrane helix receptor genes.</title>
        <authorList>
            <person name="Suwa M."/>
            <person name="Sato T."/>
            <person name="Okouchi I."/>
            <person name="Arita M."/>
            <person name="Futami K."/>
            <person name="Matsumoto S."/>
            <person name="Tsutsumi S."/>
            <person name="Aburatani H."/>
            <person name="Asai K."/>
            <person name="Akiyama Y."/>
        </authorList>
    </citation>
    <scope>NUCLEOTIDE SEQUENCE [GENOMIC DNA]</scope>
</reference>
<reference key="2">
    <citation type="submission" date="2005-07" db="EMBL/GenBank/DDBJ databases">
        <authorList>
            <person name="Mural R.J."/>
            <person name="Istrail S."/>
            <person name="Sutton G.G."/>
            <person name="Florea L."/>
            <person name="Halpern A.L."/>
            <person name="Mobarry C.M."/>
            <person name="Lippert R."/>
            <person name="Walenz B."/>
            <person name="Shatkay H."/>
            <person name="Dew I."/>
            <person name="Miller J.R."/>
            <person name="Flanigan M.J."/>
            <person name="Edwards N.J."/>
            <person name="Bolanos R."/>
            <person name="Fasulo D."/>
            <person name="Halldorsson B.V."/>
            <person name="Hannenhalli S."/>
            <person name="Turner R."/>
            <person name="Yooseph S."/>
            <person name="Lu F."/>
            <person name="Nusskern D.R."/>
            <person name="Shue B.C."/>
            <person name="Zheng X.H."/>
            <person name="Zhong F."/>
            <person name="Delcher A.L."/>
            <person name="Huson D.H."/>
            <person name="Kravitz S.A."/>
            <person name="Mouchard L."/>
            <person name="Reinert K."/>
            <person name="Remington K.A."/>
            <person name="Clark A.G."/>
            <person name="Waterman M.S."/>
            <person name="Eichler E.E."/>
            <person name="Adams M.D."/>
            <person name="Hunkapiller M.W."/>
            <person name="Myers E.W."/>
            <person name="Venter J.C."/>
        </authorList>
    </citation>
    <scope>NUCLEOTIDE SEQUENCE [LARGE SCALE GENOMIC DNA]</scope>
</reference>
<reference key="3">
    <citation type="journal article" date="2004" name="Genome Res.">
        <title>The status, quality, and expansion of the NIH full-length cDNA project: the Mammalian Gene Collection (MGC).</title>
        <authorList>
            <consortium name="The MGC Project Team"/>
        </authorList>
    </citation>
    <scope>NUCLEOTIDE SEQUENCE [LARGE SCALE MRNA]</scope>
</reference>
<reference key="4">
    <citation type="journal article" date="2004" name="Proc. Natl. Acad. Sci. U.S.A.">
        <title>The human olfactory receptor gene family.</title>
        <authorList>
            <person name="Malnic B."/>
            <person name="Godfrey P.A."/>
            <person name="Buck L.B."/>
        </authorList>
    </citation>
    <scope>IDENTIFICATION</scope>
</reference>
<reference key="5">
    <citation type="journal article" date="2004" name="Proc. Natl. Acad. Sci. U.S.A.">
        <authorList>
            <person name="Malnic B."/>
            <person name="Godfrey P.A."/>
            <person name="Buck L.B."/>
        </authorList>
    </citation>
    <scope>ERRATUM OF PUBMED:14983052</scope>
</reference>
<accession>Q6IFH4</accession>
<accession>B2RPR3</accession>
<accession>Q8NGW0</accession>
<organism>
    <name type="scientific">Homo sapiens</name>
    <name type="common">Human</name>
    <dbReference type="NCBI Taxonomy" id="9606"/>
    <lineage>
        <taxon>Eukaryota</taxon>
        <taxon>Metazoa</taxon>
        <taxon>Chordata</taxon>
        <taxon>Craniata</taxon>
        <taxon>Vertebrata</taxon>
        <taxon>Euteleostomi</taxon>
        <taxon>Mammalia</taxon>
        <taxon>Eutheria</taxon>
        <taxon>Euarchontoglires</taxon>
        <taxon>Primates</taxon>
        <taxon>Haplorrhini</taxon>
        <taxon>Catarrhini</taxon>
        <taxon>Hominidae</taxon>
        <taxon>Homo</taxon>
    </lineage>
</organism>
<keyword id="KW-1003">Cell membrane</keyword>
<keyword id="KW-1015">Disulfide bond</keyword>
<keyword id="KW-0297">G-protein coupled receptor</keyword>
<keyword id="KW-0325">Glycoprotein</keyword>
<keyword id="KW-0472">Membrane</keyword>
<keyword id="KW-0552">Olfaction</keyword>
<keyword id="KW-0675">Receptor</keyword>
<keyword id="KW-1185">Reference proteome</keyword>
<keyword id="KW-0716">Sensory transduction</keyword>
<keyword id="KW-0807">Transducer</keyword>
<keyword id="KW-0812">Transmembrane</keyword>
<keyword id="KW-1133">Transmembrane helix</keyword>
<proteinExistence type="evidence at transcript level"/>